<protein>
    <recommendedName>
        <fullName>Presenilin hop-1</fullName>
    </recommendedName>
</protein>
<proteinExistence type="evidence at transcript level"/>
<organism>
    <name type="scientific">Caenorhabditis elegans</name>
    <dbReference type="NCBI Taxonomy" id="6239"/>
    <lineage>
        <taxon>Eukaryota</taxon>
        <taxon>Metazoa</taxon>
        <taxon>Ecdysozoa</taxon>
        <taxon>Nematoda</taxon>
        <taxon>Chromadorea</taxon>
        <taxon>Rhabditida</taxon>
        <taxon>Rhabditina</taxon>
        <taxon>Rhabditomorpha</taxon>
        <taxon>Rhabditoidea</taxon>
        <taxon>Rhabditidae</taxon>
        <taxon>Peloderinae</taxon>
        <taxon>Caenorhabditis</taxon>
    </lineage>
</organism>
<feature type="chain" id="PRO_0000073902" description="Presenilin hop-1">
    <location>
        <begin position="1"/>
        <end position="358"/>
    </location>
</feature>
<feature type="topological domain" description="Cytoplasmic" evidence="2">
    <location>
        <begin position="1"/>
        <end position="12"/>
    </location>
</feature>
<feature type="transmembrane region" description="Helical" evidence="2">
    <location>
        <begin position="13"/>
        <end position="33"/>
    </location>
</feature>
<feature type="topological domain" description="Lumenal" evidence="2">
    <location>
        <begin position="34"/>
        <end position="57"/>
    </location>
</feature>
<feature type="transmembrane region" description="Helical" evidence="2">
    <location>
        <begin position="58"/>
        <end position="78"/>
    </location>
</feature>
<feature type="topological domain" description="Cytoplasmic" evidence="2">
    <location>
        <begin position="79"/>
        <end position="86"/>
    </location>
</feature>
<feature type="transmembrane region" description="Helical" evidence="2">
    <location>
        <begin position="87"/>
        <end position="107"/>
    </location>
</feature>
<feature type="topological domain" description="Lumenal" evidence="2">
    <location>
        <begin position="108"/>
        <end position="115"/>
    </location>
</feature>
<feature type="transmembrane region" description="Helical" evidence="2">
    <location>
        <begin position="116"/>
        <end position="136"/>
    </location>
</feature>
<feature type="topological domain" description="Cytoplasmic" evidence="2">
    <location>
        <begin position="137"/>
        <end position="148"/>
    </location>
</feature>
<feature type="transmembrane region" description="Helical" evidence="2">
    <location>
        <begin position="149"/>
        <end position="169"/>
    </location>
</feature>
<feature type="topological domain" description="Lumenal" evidence="2">
    <location>
        <position position="170"/>
    </location>
</feature>
<feature type="transmembrane region" description="Helical" evidence="2">
    <location>
        <begin position="171"/>
        <end position="191"/>
    </location>
</feature>
<feature type="topological domain" description="Cytoplasmic" evidence="2">
    <location>
        <begin position="192"/>
        <end position="273"/>
    </location>
</feature>
<feature type="transmembrane region" description="Helical" evidence="2">
    <location>
        <begin position="274"/>
        <end position="294"/>
    </location>
</feature>
<feature type="topological domain" description="Lumenal" evidence="2">
    <location>
        <begin position="295"/>
        <end position="297"/>
    </location>
</feature>
<feature type="transmembrane region" description="Helical" evidence="2">
    <location>
        <begin position="298"/>
        <end position="318"/>
    </location>
</feature>
<feature type="topological domain" description="Cytoplasmic" evidence="2">
    <location>
        <begin position="319"/>
        <end position="321"/>
    </location>
</feature>
<feature type="intramembrane region" description="Helical" evidence="2">
    <location>
        <begin position="322"/>
        <end position="342"/>
    </location>
</feature>
<feature type="topological domain" description="Cytoplasmic" evidence="2">
    <location>
        <begin position="343"/>
        <end position="358"/>
    </location>
</feature>
<feature type="region of interest" description="Disordered" evidence="3">
    <location>
        <begin position="221"/>
        <end position="242"/>
    </location>
</feature>
<feature type="short sequence motif" description="PAL">
    <location>
        <begin position="324"/>
        <end position="326"/>
    </location>
</feature>
<feature type="compositionally biased region" description="Polar residues" evidence="3">
    <location>
        <begin position="221"/>
        <end position="240"/>
    </location>
</feature>
<feature type="active site" evidence="1">
    <location>
        <position position="182"/>
    </location>
</feature>
<feature type="active site" evidence="1">
    <location>
        <position position="278"/>
    </location>
</feature>
<name>HOP1_CAEEL</name>
<reference key="1">
    <citation type="journal article" date="1997" name="Proc. Natl. Acad. Sci. U.S.A.">
        <title>HOP-1, a Caenorhabditis elegans presenilin, appears to be functionally redundant with SEL-12 presenilin and to facilitate LIN-12 and GLP-1 signaling.</title>
        <authorList>
            <person name="Li X."/>
            <person name="Greenwald I."/>
        </authorList>
    </citation>
    <scope>NUCLEOTIDE SEQUENCE [GENOMIC DNA]</scope>
    <source>
        <strain>Bristol N2</strain>
    </source>
</reference>
<reference key="2">
    <citation type="journal article" date="1998" name="Science">
        <title>Genome sequence of the nematode C. elegans: a platform for investigating biology.</title>
        <authorList>
            <consortium name="The C. elegans sequencing consortium"/>
        </authorList>
    </citation>
    <scope>NUCLEOTIDE SEQUENCE [LARGE SCALE GENOMIC DNA]</scope>
    <source>
        <strain>Bristol N2</strain>
    </source>
</reference>
<reference key="3">
    <citation type="journal article" date="1999" name="Proc. Natl. Acad. Sci. U.S.A.">
        <title>Reverse genetic analysis of Caenorhabditis elegans presenilins reveals redundant but unequal roles for sel-12 and hop-1 in Notch-pathway signaling.</title>
        <authorList>
            <person name="Westlund B."/>
            <person name="Parry D."/>
            <person name="Clover R."/>
            <person name="Basson M."/>
            <person name="Johnson C.D."/>
        </authorList>
    </citation>
    <scope>FUNCTION</scope>
</reference>
<reference key="4">
    <citation type="journal article" date="2002" name="EMBO J.">
        <title>Loss of spr-5 bypasses the requirement for the C.elegans presenilin sel-12 by derepressing hop-1.</title>
        <authorList>
            <person name="Eimer S."/>
            <person name="Lakowski B."/>
            <person name="Donhauser R."/>
            <person name="Baumeister R."/>
        </authorList>
    </citation>
    <scope>DOWN-REGULATION BY SPR-5</scope>
</reference>
<reference key="5">
    <citation type="journal article" date="2002" name="Genes Dev.">
        <title>Suppressors of the egg-laying defective phenotype of sel-12 presenilin mutants implicate the CoREST corepressor complex in LIN-12/Notch signaling in C. elegans.</title>
        <authorList>
            <person name="Jarriault S."/>
            <person name="Greenwald I."/>
        </authorList>
    </citation>
    <scope>DOWN-REGULATION BY SPR-1</scope>
</reference>
<reference key="6">
    <citation type="journal article" date="2003" name="Development">
        <title>Two suppressors of sel-12 encode C2H2 zinc-finger proteins that regulate presenilin transcription in Caenorhabditis elegans.</title>
        <authorList>
            <person name="Lakowski B."/>
            <person name="Eimer S."/>
            <person name="Goebel C."/>
            <person name="Boettcher A."/>
            <person name="Wagler B."/>
            <person name="Baumeister R."/>
        </authorList>
    </citation>
    <scope>DEVELOPMENTAL STAGE</scope>
    <scope>DOWN-REGULATION BY SPR-3 AND SPR-4</scope>
</reference>
<dbReference type="EMBL" id="AF021905">
    <property type="protein sequence ID" value="AAB84394.1"/>
    <property type="molecule type" value="Genomic_DNA"/>
</dbReference>
<dbReference type="EMBL" id="FO080611">
    <property type="protein sequence ID" value="CCD65145.1"/>
    <property type="molecule type" value="Genomic_DNA"/>
</dbReference>
<dbReference type="PIR" id="T15184">
    <property type="entry name" value="T15184"/>
</dbReference>
<dbReference type="RefSeq" id="NP_491328.1">
    <property type="nucleotide sequence ID" value="NM_058927.2"/>
</dbReference>
<dbReference type="SMR" id="O02100"/>
<dbReference type="FunCoup" id="O02100">
    <property type="interactions" value="86"/>
</dbReference>
<dbReference type="STRING" id="6239.C18E3.8.1"/>
<dbReference type="MEROPS" id="A22.010"/>
<dbReference type="PaxDb" id="6239-C18E3.8"/>
<dbReference type="EnsemblMetazoa" id="C18E3.8.1">
    <property type="protein sequence ID" value="C18E3.8.1"/>
    <property type="gene ID" value="WBGene00001985"/>
</dbReference>
<dbReference type="GeneID" id="172017"/>
<dbReference type="KEGG" id="cel:CELE_C18E3.8"/>
<dbReference type="UCSC" id="C18E3.8">
    <property type="organism name" value="c. elegans"/>
</dbReference>
<dbReference type="AGR" id="WB:WBGene00001985"/>
<dbReference type="CTD" id="172017"/>
<dbReference type="WormBase" id="C18E3.8">
    <property type="protein sequence ID" value="CE08317"/>
    <property type="gene ID" value="WBGene00001985"/>
    <property type="gene designation" value="hop-1"/>
</dbReference>
<dbReference type="eggNOG" id="KOG2736">
    <property type="taxonomic scope" value="Eukaryota"/>
</dbReference>
<dbReference type="HOGENOM" id="CLU_022975_3_0_1"/>
<dbReference type="InParanoid" id="O02100"/>
<dbReference type="OMA" id="ALCMIFV"/>
<dbReference type="OrthoDB" id="20287at2759"/>
<dbReference type="PhylomeDB" id="O02100"/>
<dbReference type="SignaLink" id="O02100"/>
<dbReference type="PRO" id="PR:O02100"/>
<dbReference type="Proteomes" id="UP000001940">
    <property type="component" value="Chromosome I"/>
</dbReference>
<dbReference type="Bgee" id="WBGene00001985">
    <property type="expression patterns" value="Expressed in germ line (C elegans) and 3 other cell types or tissues"/>
</dbReference>
<dbReference type="GO" id="GO:0005789">
    <property type="term" value="C:endoplasmic reticulum membrane"/>
    <property type="evidence" value="ECO:0007669"/>
    <property type="project" value="UniProtKB-SubCell"/>
</dbReference>
<dbReference type="GO" id="GO:0070765">
    <property type="term" value="C:gamma-secretase complex"/>
    <property type="evidence" value="ECO:0000318"/>
    <property type="project" value="GO_Central"/>
</dbReference>
<dbReference type="GO" id="GO:0000139">
    <property type="term" value="C:Golgi membrane"/>
    <property type="evidence" value="ECO:0007669"/>
    <property type="project" value="UniProtKB-SubCell"/>
</dbReference>
<dbReference type="GO" id="GO:0042500">
    <property type="term" value="F:aspartic endopeptidase activity, intramembrane cleaving"/>
    <property type="evidence" value="ECO:0007669"/>
    <property type="project" value="InterPro"/>
</dbReference>
<dbReference type="GO" id="GO:0004175">
    <property type="term" value="F:endopeptidase activity"/>
    <property type="evidence" value="ECO:0000318"/>
    <property type="project" value="GO_Central"/>
</dbReference>
<dbReference type="GO" id="GO:0034205">
    <property type="term" value="P:amyloid-beta formation"/>
    <property type="evidence" value="ECO:0000318"/>
    <property type="project" value="GO_Central"/>
</dbReference>
<dbReference type="GO" id="GO:0055074">
    <property type="term" value="P:calcium ion homeostasis"/>
    <property type="evidence" value="ECO:0000318"/>
    <property type="project" value="GO_Central"/>
</dbReference>
<dbReference type="GO" id="GO:0006509">
    <property type="term" value="P:membrane protein ectodomain proteolysis"/>
    <property type="evidence" value="ECO:0000318"/>
    <property type="project" value="GO_Central"/>
</dbReference>
<dbReference type="GO" id="GO:0007219">
    <property type="term" value="P:Notch signaling pathway"/>
    <property type="evidence" value="ECO:0000316"/>
    <property type="project" value="WormBase"/>
</dbReference>
<dbReference type="GO" id="GO:1905938">
    <property type="term" value="P:positive regulation of germ cell proliferation"/>
    <property type="evidence" value="ECO:0000315"/>
    <property type="project" value="WormBase"/>
</dbReference>
<dbReference type="GO" id="GO:0016485">
    <property type="term" value="P:protein processing"/>
    <property type="evidence" value="ECO:0000318"/>
    <property type="project" value="GO_Central"/>
</dbReference>
<dbReference type="FunFam" id="1.10.472.100:FF:000004">
    <property type="entry name" value="Presenilin spe-4"/>
    <property type="match status" value="1"/>
</dbReference>
<dbReference type="Gene3D" id="1.10.472.100">
    <property type="entry name" value="Presenilin"/>
    <property type="match status" value="1"/>
</dbReference>
<dbReference type="InterPro" id="IPR001108">
    <property type="entry name" value="Peptidase_A22A"/>
</dbReference>
<dbReference type="InterPro" id="IPR006639">
    <property type="entry name" value="Preselin/SPP"/>
</dbReference>
<dbReference type="InterPro" id="IPR042524">
    <property type="entry name" value="Presenilin_C"/>
</dbReference>
<dbReference type="PANTHER" id="PTHR10202">
    <property type="entry name" value="PRESENILIN"/>
    <property type="match status" value="1"/>
</dbReference>
<dbReference type="PANTHER" id="PTHR10202:SF14">
    <property type="entry name" value="PRESENILIN HOP-1"/>
    <property type="match status" value="1"/>
</dbReference>
<dbReference type="Pfam" id="PF01080">
    <property type="entry name" value="Presenilin"/>
    <property type="match status" value="2"/>
</dbReference>
<dbReference type="PRINTS" id="PR01072">
    <property type="entry name" value="PRESENILIN"/>
</dbReference>
<dbReference type="SMART" id="SM00730">
    <property type="entry name" value="PSN"/>
    <property type="match status" value="1"/>
</dbReference>
<sequence length="358" mass="39865">MPRTKRVYSGKTITGVLYPVAICMLFVAINVKLSQPEQQEQSKVVYGLFHSYDTADSGTITLYLIGFLILTTSLGVFCYQMKFYKAIKVYVLANSIGILLVYSVFHFQRIAEAQSIPVSVPTFFFLILQFGGLGITCLHWKSHRRLHQFYLIMLAGLTAIFILNILPDWTVWMALTAISFWDIVAVLTPCGPLKMLVETANRRGDDKFPAILYNSSSYVNEVDSPDTTRSNSTPLTEFNNSSSSRLLESDSLLRPPVIPRQIREVREVEGTIRLGMGDFVFYSLMLGNTVQTCPLPTVVACFVSNLVGLTITLPIVTLSQTALPALPFPLAIAAIFYFSSHIALTPFTDLCTSQLILI</sequence>
<comment type="function">
    <text evidence="4">Probable catalytic subunit of the gamma-secretase complex, an endoprotease complex that catalyzes the intramembrane cleavage of integral membrane proteins such as Notch receptors (lin-12 or glp-1). Probably works redundantly of lin-12, which provides more presenilin function.</text>
</comment>
<comment type="subunit">
    <text evidence="6">Homodimer. Component of the gamma-secretase complex, a complex probably composed of the presenilin homodimer (sel-12, hop-1 or spe-4), nicastrin (aph-2), aph-1 and pen-2 (Probable).</text>
</comment>
<comment type="subcellular location">
    <subcellularLocation>
        <location evidence="1">Endoplasmic reticulum membrane</location>
        <topology evidence="1">Multi-pass membrane protein</topology>
    </subcellularLocation>
    <subcellularLocation>
        <location evidence="1">Golgi apparatus membrane</location>
        <topology evidence="1">Multi-pass membrane protein</topology>
    </subcellularLocation>
</comment>
<comment type="tissue specificity">
    <text>Weakly expressed.</text>
</comment>
<comment type="developmental stage">
    <text evidence="5">Expressed both maternally and zygotically. Predominantly expressed in the adult. Weakly expressed in the embryo, L2 and L3 stages, and almost absent in L1 stage larvae.</text>
</comment>
<comment type="induction">
    <text>Down-regulated by spr-1, spr-3, spr-4 and spr-5.</text>
</comment>
<comment type="domain">
    <text evidence="1">The PAL motif is required for normal active site conformation.</text>
</comment>
<comment type="similarity">
    <text evidence="6">Belongs to the peptidase A22A family.</text>
</comment>
<keyword id="KW-0256">Endoplasmic reticulum</keyword>
<keyword id="KW-0333">Golgi apparatus</keyword>
<keyword id="KW-0472">Membrane</keyword>
<keyword id="KW-0914">Notch signaling pathway</keyword>
<keyword id="KW-1185">Reference proteome</keyword>
<keyword id="KW-0812">Transmembrane</keyword>
<keyword id="KW-1133">Transmembrane helix</keyword>
<accession>O02100</accession>
<gene>
    <name type="primary">hop-1</name>
    <name type="ORF">C18E3.8</name>
</gene>
<evidence type="ECO:0000250" key="1"/>
<evidence type="ECO:0000255" key="2"/>
<evidence type="ECO:0000256" key="3">
    <source>
        <dbReference type="SAM" id="MobiDB-lite"/>
    </source>
</evidence>
<evidence type="ECO:0000269" key="4">
    <source>
    </source>
</evidence>
<evidence type="ECO:0000269" key="5">
    <source>
    </source>
</evidence>
<evidence type="ECO:0000305" key="6"/>